<evidence type="ECO:0000255" key="1">
    <source>
        <dbReference type="HAMAP-Rule" id="MF_00643"/>
    </source>
</evidence>
<sequence length="39" mass="4424">MTIDRTYPIFTVRWLAVHGLAVPTVSFLGSISAMQFIQR</sequence>
<keyword id="KW-0150">Chloroplast</keyword>
<keyword id="KW-0249">Electron transport</keyword>
<keyword id="KW-0349">Heme</keyword>
<keyword id="KW-0408">Iron</keyword>
<keyword id="KW-0472">Membrane</keyword>
<keyword id="KW-0479">Metal-binding</keyword>
<keyword id="KW-0602">Photosynthesis</keyword>
<keyword id="KW-0604">Photosystem II</keyword>
<keyword id="KW-0934">Plastid</keyword>
<keyword id="KW-0793">Thylakoid</keyword>
<keyword id="KW-0812">Transmembrane</keyword>
<keyword id="KW-1133">Transmembrane helix</keyword>
<keyword id="KW-0813">Transport</keyword>
<name>PSBF_CALFL</name>
<gene>
    <name evidence="1" type="primary">psbF</name>
</gene>
<reference key="1">
    <citation type="journal article" date="2000" name="Am. J. Bot.">
        <title>Utility of 17 chloroplast genes for inferring the phylogeny of the basal angiosperms.</title>
        <authorList>
            <person name="Graham S.W."/>
            <person name="Olmstead R.G."/>
        </authorList>
    </citation>
    <scope>NUCLEOTIDE SEQUENCE [GENOMIC DNA]</scope>
</reference>
<feature type="chain" id="PRO_0000200365" description="Cytochrome b559 subunit beta">
    <location>
        <begin position="1"/>
        <end position="39"/>
    </location>
</feature>
<feature type="transmembrane region" description="Helical" evidence="1">
    <location>
        <begin position="14"/>
        <end position="30"/>
    </location>
</feature>
<feature type="binding site" description="axial binding residue" evidence="1">
    <location>
        <position position="18"/>
    </location>
    <ligand>
        <name>heme</name>
        <dbReference type="ChEBI" id="CHEBI:30413"/>
        <note>ligand shared with alpha subunit</note>
    </ligand>
    <ligandPart>
        <name>Fe</name>
        <dbReference type="ChEBI" id="CHEBI:18248"/>
    </ligandPart>
</feature>
<accession>Q7J1B9</accession>
<protein>
    <recommendedName>
        <fullName evidence="1">Cytochrome b559 subunit beta</fullName>
    </recommendedName>
    <alternativeName>
        <fullName evidence="1">PSII reaction center subunit VI</fullName>
    </alternativeName>
</protein>
<geneLocation type="chloroplast"/>
<dbReference type="EMBL" id="AF123831">
    <property type="protein sequence ID" value="AAG26203.1"/>
    <property type="molecule type" value="Genomic_DNA"/>
</dbReference>
<dbReference type="SMR" id="Q7J1B9"/>
<dbReference type="GO" id="GO:0009535">
    <property type="term" value="C:chloroplast thylakoid membrane"/>
    <property type="evidence" value="ECO:0007669"/>
    <property type="project" value="UniProtKB-SubCell"/>
</dbReference>
<dbReference type="GO" id="GO:0009539">
    <property type="term" value="C:photosystem II reaction center"/>
    <property type="evidence" value="ECO:0007669"/>
    <property type="project" value="InterPro"/>
</dbReference>
<dbReference type="GO" id="GO:0009055">
    <property type="term" value="F:electron transfer activity"/>
    <property type="evidence" value="ECO:0007669"/>
    <property type="project" value="UniProtKB-UniRule"/>
</dbReference>
<dbReference type="GO" id="GO:0020037">
    <property type="term" value="F:heme binding"/>
    <property type="evidence" value="ECO:0007669"/>
    <property type="project" value="InterPro"/>
</dbReference>
<dbReference type="GO" id="GO:0005506">
    <property type="term" value="F:iron ion binding"/>
    <property type="evidence" value="ECO:0007669"/>
    <property type="project" value="UniProtKB-UniRule"/>
</dbReference>
<dbReference type="GO" id="GO:0009767">
    <property type="term" value="P:photosynthetic electron transport chain"/>
    <property type="evidence" value="ECO:0007669"/>
    <property type="project" value="InterPro"/>
</dbReference>
<dbReference type="HAMAP" id="MF_00643">
    <property type="entry name" value="PSII_PsbF"/>
    <property type="match status" value="1"/>
</dbReference>
<dbReference type="InterPro" id="IPR006241">
    <property type="entry name" value="PSII_cyt_b559_bsu"/>
</dbReference>
<dbReference type="InterPro" id="IPR006216">
    <property type="entry name" value="PSII_cyt_b559_CS"/>
</dbReference>
<dbReference type="InterPro" id="IPR013081">
    <property type="entry name" value="PSII_cyt_b559_N"/>
</dbReference>
<dbReference type="NCBIfam" id="TIGR01333">
    <property type="entry name" value="cyt_b559_beta"/>
    <property type="match status" value="1"/>
</dbReference>
<dbReference type="Pfam" id="PF00283">
    <property type="entry name" value="Cytochrom_B559"/>
    <property type="match status" value="1"/>
</dbReference>
<dbReference type="PIRSF" id="PIRSF000037">
    <property type="entry name" value="PsbF"/>
    <property type="match status" value="1"/>
</dbReference>
<dbReference type="SUPFAM" id="SSF161045">
    <property type="entry name" value="Cytochrome b559 subunits"/>
    <property type="match status" value="1"/>
</dbReference>
<dbReference type="PROSITE" id="PS00537">
    <property type="entry name" value="CYTOCHROME_B559"/>
    <property type="match status" value="1"/>
</dbReference>
<comment type="function">
    <text evidence="1">This b-type cytochrome is tightly associated with the reaction center of photosystem II (PSII). PSII is a light-driven water:plastoquinone oxidoreductase that uses light energy to abstract electrons from H(2)O, generating O(2) and a proton gradient subsequently used for ATP formation. It consists of a core antenna complex that captures photons, and an electron transfer chain that converts photonic excitation into a charge separation.</text>
</comment>
<comment type="cofactor">
    <cofactor evidence="1">
        <name>heme b</name>
        <dbReference type="ChEBI" id="CHEBI:60344"/>
    </cofactor>
    <text evidence="1">With its partner (PsbE) binds heme. PSII binds additional chlorophylls, carotenoids and specific lipids.</text>
</comment>
<comment type="subunit">
    <text evidence="1">Heterodimer of an alpha subunit and a beta subunit. PSII is composed of 1 copy each of membrane proteins PsbA, PsbB, PsbC, PsbD, PsbE, PsbF, PsbH, PsbI, PsbJ, PsbK, PsbL, PsbM, PsbT, PsbX, PsbY, PsbZ, Psb30/Ycf12, at least 3 peripheral proteins of the oxygen-evolving complex and a large number of cofactors. It forms dimeric complexes.</text>
</comment>
<comment type="subcellular location">
    <subcellularLocation>
        <location evidence="1">Plastid</location>
        <location evidence="1">Chloroplast thylakoid membrane</location>
        <topology evidence="1">Single-pass membrane protein</topology>
    </subcellularLocation>
</comment>
<comment type="similarity">
    <text evidence="1">Belongs to the PsbE/PsbF family.</text>
</comment>
<organism>
    <name type="scientific">Calycanthus floridus</name>
    <name type="common">Eastern sweetshrub</name>
    <dbReference type="NCBI Taxonomy" id="3429"/>
    <lineage>
        <taxon>Eukaryota</taxon>
        <taxon>Viridiplantae</taxon>
        <taxon>Streptophyta</taxon>
        <taxon>Embryophyta</taxon>
        <taxon>Tracheophyta</taxon>
        <taxon>Spermatophyta</taxon>
        <taxon>Magnoliopsida</taxon>
        <taxon>Magnoliidae</taxon>
        <taxon>Laurales</taxon>
        <taxon>Calycanthaceae</taxon>
        <taxon>Calycanthus</taxon>
    </lineage>
</organism>
<proteinExistence type="inferred from homology"/>